<keyword id="KW-1003">Cell membrane</keyword>
<keyword id="KW-0285">Flavoprotein</keyword>
<keyword id="KW-0288">FMN</keyword>
<keyword id="KW-0472">Membrane</keyword>
<keyword id="KW-0560">Oxidoreductase</keyword>
<keyword id="KW-0665">Pyrimidine biosynthesis</keyword>
<comment type="function">
    <text evidence="1">Catalyzes the conversion of dihydroorotate to orotate with quinone as electron acceptor.</text>
</comment>
<comment type="catalytic activity">
    <reaction evidence="1">
        <text>(S)-dihydroorotate + a quinone = orotate + a quinol</text>
        <dbReference type="Rhea" id="RHEA:30187"/>
        <dbReference type="ChEBI" id="CHEBI:24646"/>
        <dbReference type="ChEBI" id="CHEBI:30839"/>
        <dbReference type="ChEBI" id="CHEBI:30864"/>
        <dbReference type="ChEBI" id="CHEBI:132124"/>
        <dbReference type="EC" id="1.3.5.2"/>
    </reaction>
</comment>
<comment type="cofactor">
    <cofactor evidence="1">
        <name>FMN</name>
        <dbReference type="ChEBI" id="CHEBI:58210"/>
    </cofactor>
    <text evidence="1">Binds 1 FMN per subunit.</text>
</comment>
<comment type="pathway">
    <text evidence="1">Pyrimidine metabolism; UMP biosynthesis via de novo pathway; orotate from (S)-dihydroorotate (quinone route): step 1/1.</text>
</comment>
<comment type="subunit">
    <text evidence="1">Monomer.</text>
</comment>
<comment type="subcellular location">
    <subcellularLocation>
        <location evidence="1">Cell membrane</location>
        <topology evidence="1">Peripheral membrane protein</topology>
    </subcellularLocation>
</comment>
<comment type="similarity">
    <text evidence="1">Belongs to the dihydroorotate dehydrogenase family. Type 2 subfamily.</text>
</comment>
<accession>Q4KFI7</accession>
<feature type="chain" id="PRO_1000024201" description="Dihydroorotate dehydrogenase (quinone)">
    <location>
        <begin position="1"/>
        <end position="339"/>
    </location>
</feature>
<feature type="active site" description="Nucleophile" evidence="1">
    <location>
        <position position="174"/>
    </location>
</feature>
<feature type="binding site" evidence="1">
    <location>
        <begin position="61"/>
        <end position="65"/>
    </location>
    <ligand>
        <name>FMN</name>
        <dbReference type="ChEBI" id="CHEBI:58210"/>
    </ligand>
</feature>
<feature type="binding site" evidence="1">
    <location>
        <position position="65"/>
    </location>
    <ligand>
        <name>substrate</name>
    </ligand>
</feature>
<feature type="binding site" evidence="1">
    <location>
        <position position="85"/>
    </location>
    <ligand>
        <name>FMN</name>
        <dbReference type="ChEBI" id="CHEBI:58210"/>
    </ligand>
</feature>
<feature type="binding site" evidence="1">
    <location>
        <begin position="110"/>
        <end position="114"/>
    </location>
    <ligand>
        <name>substrate</name>
    </ligand>
</feature>
<feature type="binding site" evidence="1">
    <location>
        <position position="138"/>
    </location>
    <ligand>
        <name>FMN</name>
        <dbReference type="ChEBI" id="CHEBI:58210"/>
    </ligand>
</feature>
<feature type="binding site" evidence="1">
    <location>
        <position position="171"/>
    </location>
    <ligand>
        <name>FMN</name>
        <dbReference type="ChEBI" id="CHEBI:58210"/>
    </ligand>
</feature>
<feature type="binding site" evidence="1">
    <location>
        <position position="171"/>
    </location>
    <ligand>
        <name>substrate</name>
    </ligand>
</feature>
<feature type="binding site" evidence="1">
    <location>
        <position position="176"/>
    </location>
    <ligand>
        <name>substrate</name>
    </ligand>
</feature>
<feature type="binding site" evidence="1">
    <location>
        <position position="216"/>
    </location>
    <ligand>
        <name>FMN</name>
        <dbReference type="ChEBI" id="CHEBI:58210"/>
    </ligand>
</feature>
<feature type="binding site" evidence="1">
    <location>
        <position position="244"/>
    </location>
    <ligand>
        <name>FMN</name>
        <dbReference type="ChEBI" id="CHEBI:58210"/>
    </ligand>
</feature>
<feature type="binding site" evidence="1">
    <location>
        <begin position="245"/>
        <end position="246"/>
    </location>
    <ligand>
        <name>substrate</name>
    </ligand>
</feature>
<feature type="binding site" evidence="1">
    <location>
        <position position="267"/>
    </location>
    <ligand>
        <name>FMN</name>
        <dbReference type="ChEBI" id="CHEBI:58210"/>
    </ligand>
</feature>
<feature type="binding site" evidence="1">
    <location>
        <position position="296"/>
    </location>
    <ligand>
        <name>FMN</name>
        <dbReference type="ChEBI" id="CHEBI:58210"/>
    </ligand>
</feature>
<feature type="binding site" evidence="1">
    <location>
        <begin position="317"/>
        <end position="318"/>
    </location>
    <ligand>
        <name>FMN</name>
        <dbReference type="ChEBI" id="CHEBI:58210"/>
    </ligand>
</feature>
<organism>
    <name type="scientific">Pseudomonas fluorescens (strain ATCC BAA-477 / NRRL B-23932 / Pf-5)</name>
    <dbReference type="NCBI Taxonomy" id="220664"/>
    <lineage>
        <taxon>Bacteria</taxon>
        <taxon>Pseudomonadati</taxon>
        <taxon>Pseudomonadota</taxon>
        <taxon>Gammaproteobacteria</taxon>
        <taxon>Pseudomonadales</taxon>
        <taxon>Pseudomonadaceae</taxon>
        <taxon>Pseudomonas</taxon>
    </lineage>
</organism>
<reference key="1">
    <citation type="journal article" date="2005" name="Nat. Biotechnol.">
        <title>Complete genome sequence of the plant commensal Pseudomonas fluorescens Pf-5.</title>
        <authorList>
            <person name="Paulsen I.T."/>
            <person name="Press C.M."/>
            <person name="Ravel J."/>
            <person name="Kobayashi D.Y."/>
            <person name="Myers G.S.A."/>
            <person name="Mavrodi D.V."/>
            <person name="DeBoy R.T."/>
            <person name="Seshadri R."/>
            <person name="Ren Q."/>
            <person name="Madupu R."/>
            <person name="Dodson R.J."/>
            <person name="Durkin A.S."/>
            <person name="Brinkac L.M."/>
            <person name="Daugherty S.C."/>
            <person name="Sullivan S.A."/>
            <person name="Rosovitz M.J."/>
            <person name="Gwinn M.L."/>
            <person name="Zhou L."/>
            <person name="Schneider D.J."/>
            <person name="Cartinhour S.W."/>
            <person name="Nelson W.C."/>
            <person name="Weidman J."/>
            <person name="Watkins K."/>
            <person name="Tran K."/>
            <person name="Khouri H."/>
            <person name="Pierson E.A."/>
            <person name="Pierson L.S. III"/>
            <person name="Thomashow L.S."/>
            <person name="Loper J.E."/>
        </authorList>
    </citation>
    <scope>NUCLEOTIDE SEQUENCE [LARGE SCALE GENOMIC DNA]</scope>
    <source>
        <strain>ATCC BAA-477 / NRRL B-23932 / Pf-5</strain>
    </source>
</reference>
<protein>
    <recommendedName>
        <fullName evidence="1">Dihydroorotate dehydrogenase (quinone)</fullName>
        <ecNumber evidence="1">1.3.5.2</ecNumber>
    </recommendedName>
    <alternativeName>
        <fullName evidence="1">DHOdehase</fullName>
        <shortName evidence="1">DHOD</shortName>
        <shortName evidence="1">DHODase</shortName>
    </alternativeName>
    <alternativeName>
        <fullName evidence="1">Dihydroorotate oxidase</fullName>
    </alternativeName>
</protein>
<evidence type="ECO:0000255" key="1">
    <source>
        <dbReference type="HAMAP-Rule" id="MF_00225"/>
    </source>
</evidence>
<gene>
    <name evidence="1" type="primary">pyrD</name>
    <name type="ordered locus">PFL_1877</name>
</gene>
<dbReference type="EC" id="1.3.5.2" evidence="1"/>
<dbReference type="EMBL" id="CP000076">
    <property type="protein sequence ID" value="AAY91164.1"/>
    <property type="molecule type" value="Genomic_DNA"/>
</dbReference>
<dbReference type="RefSeq" id="WP_011060197.1">
    <property type="nucleotide sequence ID" value="NC_004129.6"/>
</dbReference>
<dbReference type="SMR" id="Q4KFI7"/>
<dbReference type="STRING" id="220664.PFL_1877"/>
<dbReference type="KEGG" id="pfl:PFL_1877"/>
<dbReference type="PATRIC" id="fig|220664.5.peg.1912"/>
<dbReference type="eggNOG" id="COG0167">
    <property type="taxonomic scope" value="Bacteria"/>
</dbReference>
<dbReference type="HOGENOM" id="CLU_013640_2_0_6"/>
<dbReference type="UniPathway" id="UPA00070">
    <property type="reaction ID" value="UER00946"/>
</dbReference>
<dbReference type="Proteomes" id="UP000008540">
    <property type="component" value="Chromosome"/>
</dbReference>
<dbReference type="GO" id="GO:0005737">
    <property type="term" value="C:cytoplasm"/>
    <property type="evidence" value="ECO:0007669"/>
    <property type="project" value="InterPro"/>
</dbReference>
<dbReference type="GO" id="GO:0005886">
    <property type="term" value="C:plasma membrane"/>
    <property type="evidence" value="ECO:0007669"/>
    <property type="project" value="UniProtKB-SubCell"/>
</dbReference>
<dbReference type="GO" id="GO:0106430">
    <property type="term" value="F:dihydroorotate dehydrogenase (quinone) activity"/>
    <property type="evidence" value="ECO:0007669"/>
    <property type="project" value="UniProtKB-EC"/>
</dbReference>
<dbReference type="GO" id="GO:0006207">
    <property type="term" value="P:'de novo' pyrimidine nucleobase biosynthetic process"/>
    <property type="evidence" value="ECO:0007669"/>
    <property type="project" value="InterPro"/>
</dbReference>
<dbReference type="GO" id="GO:0044205">
    <property type="term" value="P:'de novo' UMP biosynthetic process"/>
    <property type="evidence" value="ECO:0007669"/>
    <property type="project" value="UniProtKB-UniRule"/>
</dbReference>
<dbReference type="CDD" id="cd04738">
    <property type="entry name" value="DHOD_2_like"/>
    <property type="match status" value="1"/>
</dbReference>
<dbReference type="FunFam" id="3.20.20.70:FF:000028">
    <property type="entry name" value="Dihydroorotate dehydrogenase (quinone)"/>
    <property type="match status" value="1"/>
</dbReference>
<dbReference type="Gene3D" id="3.20.20.70">
    <property type="entry name" value="Aldolase class I"/>
    <property type="match status" value="1"/>
</dbReference>
<dbReference type="HAMAP" id="MF_00225">
    <property type="entry name" value="DHO_dh_type2"/>
    <property type="match status" value="1"/>
</dbReference>
<dbReference type="InterPro" id="IPR013785">
    <property type="entry name" value="Aldolase_TIM"/>
</dbReference>
<dbReference type="InterPro" id="IPR050074">
    <property type="entry name" value="DHO_dehydrogenase"/>
</dbReference>
<dbReference type="InterPro" id="IPR012135">
    <property type="entry name" value="Dihydroorotate_DH_1_2"/>
</dbReference>
<dbReference type="InterPro" id="IPR005719">
    <property type="entry name" value="Dihydroorotate_DH_2"/>
</dbReference>
<dbReference type="InterPro" id="IPR005720">
    <property type="entry name" value="Dihydroorotate_DH_cat"/>
</dbReference>
<dbReference type="InterPro" id="IPR001295">
    <property type="entry name" value="Dihydroorotate_DH_CS"/>
</dbReference>
<dbReference type="NCBIfam" id="NF003644">
    <property type="entry name" value="PRK05286.1-1"/>
    <property type="match status" value="1"/>
</dbReference>
<dbReference type="NCBIfam" id="NF003645">
    <property type="entry name" value="PRK05286.1-2"/>
    <property type="match status" value="1"/>
</dbReference>
<dbReference type="NCBIfam" id="NF003646">
    <property type="entry name" value="PRK05286.1-4"/>
    <property type="match status" value="1"/>
</dbReference>
<dbReference type="NCBIfam" id="NF003652">
    <property type="entry name" value="PRK05286.2-5"/>
    <property type="match status" value="1"/>
</dbReference>
<dbReference type="NCBIfam" id="TIGR01036">
    <property type="entry name" value="pyrD_sub2"/>
    <property type="match status" value="1"/>
</dbReference>
<dbReference type="PANTHER" id="PTHR48109:SF4">
    <property type="entry name" value="DIHYDROOROTATE DEHYDROGENASE (QUINONE), MITOCHONDRIAL"/>
    <property type="match status" value="1"/>
</dbReference>
<dbReference type="PANTHER" id="PTHR48109">
    <property type="entry name" value="DIHYDROOROTATE DEHYDROGENASE (QUINONE), MITOCHONDRIAL-RELATED"/>
    <property type="match status" value="1"/>
</dbReference>
<dbReference type="Pfam" id="PF01180">
    <property type="entry name" value="DHO_dh"/>
    <property type="match status" value="1"/>
</dbReference>
<dbReference type="PIRSF" id="PIRSF000164">
    <property type="entry name" value="DHO_oxidase"/>
    <property type="match status" value="1"/>
</dbReference>
<dbReference type="SUPFAM" id="SSF51395">
    <property type="entry name" value="FMN-linked oxidoreductases"/>
    <property type="match status" value="1"/>
</dbReference>
<dbReference type="PROSITE" id="PS00911">
    <property type="entry name" value="DHODEHASE_1"/>
    <property type="match status" value="1"/>
</dbReference>
<sequence>MYTLARQLLFKLSPETSHDLSLDLIGAGGRLGLNGLLCKAPAQMPVKVMGLEFANPVGLAAGLDKNGAAIDGFAQLGFGFVEIGTVTPRPQPGNPKPRIFRLPQAEAIINRMGFNNLGVDNLLARVAASQYKGVLGINIGKNFDTPVERAVDDYLICLDKVYAHASYVTVNVSSPNTPGLRSLQFGESLKQLLAALSQRQQELTAIHGKRVPLAIKIAPDMSDEETVEVARALLETGMDAVIATNTTLSREGVEGLEHGAEAGGLSGAPVREKSTHTVKVLAAELAGRLPIIAVGGITEGKHAAEKIAAGASLVQLYSGFIYKGPALIRESVDAIAAMG</sequence>
<name>PYRD_PSEF5</name>
<proteinExistence type="inferred from homology"/>